<feature type="chain" id="PRO_0000245329" description="Protein HRI1">
    <location>
        <begin position="1"/>
        <end position="244"/>
    </location>
</feature>
<feature type="modified residue" description="Phosphoserine" evidence="6 7 8">
    <location>
        <position position="143"/>
    </location>
</feature>
<feature type="strand" evidence="9">
    <location>
        <begin position="3"/>
        <end position="14"/>
    </location>
</feature>
<feature type="strand" evidence="9">
    <location>
        <begin position="23"/>
        <end position="26"/>
    </location>
</feature>
<feature type="strand" evidence="9">
    <location>
        <begin position="32"/>
        <end position="40"/>
    </location>
</feature>
<feature type="turn" evidence="9">
    <location>
        <begin position="43"/>
        <end position="45"/>
    </location>
</feature>
<feature type="strand" evidence="9">
    <location>
        <begin position="46"/>
        <end position="48"/>
    </location>
</feature>
<feature type="strand" evidence="9">
    <location>
        <begin position="50"/>
        <end position="56"/>
    </location>
</feature>
<feature type="helix" evidence="9">
    <location>
        <begin position="58"/>
        <end position="60"/>
    </location>
</feature>
<feature type="strand" evidence="9">
    <location>
        <begin position="61"/>
        <end position="65"/>
    </location>
</feature>
<feature type="strand" evidence="9">
    <location>
        <begin position="67"/>
        <end position="75"/>
    </location>
</feature>
<feature type="strand" evidence="9">
    <location>
        <begin position="78"/>
        <end position="80"/>
    </location>
</feature>
<feature type="helix" evidence="9">
    <location>
        <begin position="81"/>
        <end position="85"/>
    </location>
</feature>
<feature type="strand" evidence="9">
    <location>
        <begin position="95"/>
        <end position="101"/>
    </location>
</feature>
<feature type="strand" evidence="9">
    <location>
        <begin position="107"/>
        <end position="113"/>
    </location>
</feature>
<feature type="strand" evidence="9">
    <location>
        <begin position="123"/>
        <end position="132"/>
    </location>
</feature>
<feature type="strand" evidence="9">
    <location>
        <begin position="136"/>
        <end position="138"/>
    </location>
</feature>
<feature type="strand" evidence="9">
    <location>
        <begin position="155"/>
        <end position="160"/>
    </location>
</feature>
<feature type="strand" evidence="9">
    <location>
        <begin position="165"/>
        <end position="172"/>
    </location>
</feature>
<feature type="strand" evidence="9">
    <location>
        <begin position="175"/>
        <end position="184"/>
    </location>
</feature>
<feature type="helix" evidence="9">
    <location>
        <begin position="188"/>
        <end position="190"/>
    </location>
</feature>
<feature type="strand" evidence="9">
    <location>
        <begin position="191"/>
        <end position="198"/>
    </location>
</feature>
<feature type="strand" evidence="9">
    <location>
        <begin position="204"/>
        <end position="211"/>
    </location>
</feature>
<feature type="helix" evidence="9">
    <location>
        <begin position="214"/>
        <end position="216"/>
    </location>
</feature>
<feature type="strand" evidence="9">
    <location>
        <begin position="229"/>
        <end position="232"/>
    </location>
</feature>
<feature type="strand" evidence="9">
    <location>
        <begin position="235"/>
        <end position="243"/>
    </location>
</feature>
<proteinExistence type="evidence at protein level"/>
<accession>Q05905</accession>
<accession>D6VYU5</accession>
<sequence>MPALLKRLLFQVGPHPNERTFTLSSVSTDGHYISLRPFVKPSGDELSFPFEWAFAGTNETVKANDQGNGVVTQDFNFWLDTNVYLNVPNTHRGEVNTTWKNWDSGCVEETGAVYPFGADKESVSFRELWQPVDPSREDLVIVSPNNEKFSSNARSIVLKVTDEAYDGLVIVIGRWIQGFLSQKNNNTIEGLNFIRLLEKDSGKSEFLLSYGKEVNKIPQSYENLKKGSTVTSNGLNWEVIEYHA</sequence>
<comment type="function">
    <text>Unknown. Non essential.</text>
</comment>
<comment type="subunit">
    <text evidence="1 4">Interacts with HRR25. May interact with SEC72.</text>
</comment>
<comment type="subcellular location">
    <subcellularLocation>
        <location evidence="2">Cytoplasm</location>
    </subcellularLocation>
    <subcellularLocation>
        <location evidence="2">Nucleus</location>
    </subcellularLocation>
</comment>
<comment type="miscellaneous">
    <text evidence="3">Present with 15400 molecules/cell in log phase SD medium.</text>
</comment>
<comment type="similarity">
    <text evidence="5">Belongs to the HRI1 family.</text>
</comment>
<protein>
    <recommendedName>
        <fullName>Protein HRI1</fullName>
    </recommendedName>
    <alternativeName>
        <fullName>HRR25-interacting protein 1</fullName>
    </alternativeName>
</protein>
<name>HRI1_YEAST</name>
<reference key="1">
    <citation type="journal article" date="1997" name="Nature">
        <title>The nucleotide sequence of Saccharomyces cerevisiae chromosome XII.</title>
        <authorList>
            <person name="Johnston M."/>
            <person name="Hillier L.W."/>
            <person name="Riles L."/>
            <person name="Albermann K."/>
            <person name="Andre B."/>
            <person name="Ansorge W."/>
            <person name="Benes V."/>
            <person name="Brueckner M."/>
            <person name="Delius H."/>
            <person name="Dubois E."/>
            <person name="Duesterhoeft A."/>
            <person name="Entian K.-D."/>
            <person name="Floeth M."/>
            <person name="Goffeau A."/>
            <person name="Hebling U."/>
            <person name="Heumann K."/>
            <person name="Heuss-Neitzel D."/>
            <person name="Hilbert H."/>
            <person name="Hilger F."/>
            <person name="Kleine K."/>
            <person name="Koetter P."/>
            <person name="Louis E.J."/>
            <person name="Messenguy F."/>
            <person name="Mewes H.-W."/>
            <person name="Miosga T."/>
            <person name="Moestl D."/>
            <person name="Mueller-Auer S."/>
            <person name="Nentwich U."/>
            <person name="Obermaier B."/>
            <person name="Piravandi E."/>
            <person name="Pohl T.M."/>
            <person name="Portetelle D."/>
            <person name="Purnelle B."/>
            <person name="Rechmann S."/>
            <person name="Rieger M."/>
            <person name="Rinke M."/>
            <person name="Rose M."/>
            <person name="Scharfe M."/>
            <person name="Scherens B."/>
            <person name="Scholler P."/>
            <person name="Schwager C."/>
            <person name="Schwarz S."/>
            <person name="Underwood A.P."/>
            <person name="Urrestarazu L.A."/>
            <person name="Vandenbol M."/>
            <person name="Verhasselt P."/>
            <person name="Vierendeels F."/>
            <person name="Voet M."/>
            <person name="Volckaert G."/>
            <person name="Voss H."/>
            <person name="Wambutt R."/>
            <person name="Wedler E."/>
            <person name="Wedler H."/>
            <person name="Zimmermann F.K."/>
            <person name="Zollner A."/>
            <person name="Hani J."/>
            <person name="Hoheisel J.D."/>
        </authorList>
    </citation>
    <scope>NUCLEOTIDE SEQUENCE [LARGE SCALE GENOMIC DNA]</scope>
    <source>
        <strain>ATCC 204508 / S288c</strain>
    </source>
</reference>
<reference key="2">
    <citation type="journal article" date="2014" name="G3 (Bethesda)">
        <title>The reference genome sequence of Saccharomyces cerevisiae: Then and now.</title>
        <authorList>
            <person name="Engel S.R."/>
            <person name="Dietrich F.S."/>
            <person name="Fisk D.G."/>
            <person name="Binkley G."/>
            <person name="Balakrishnan R."/>
            <person name="Costanzo M.C."/>
            <person name="Dwight S.S."/>
            <person name="Hitz B.C."/>
            <person name="Karra K."/>
            <person name="Nash R.S."/>
            <person name="Weng S."/>
            <person name="Wong E.D."/>
            <person name="Lloyd P."/>
            <person name="Skrzypek M.S."/>
            <person name="Miyasato S.R."/>
            <person name="Simison M."/>
            <person name="Cherry J.M."/>
        </authorList>
    </citation>
    <scope>GENOME REANNOTATION</scope>
    <source>
        <strain>ATCC 204508 / S288c</strain>
    </source>
</reference>
<reference key="3">
    <citation type="journal article" date="2007" name="Genome Res.">
        <title>Approaching a complete repository of sequence-verified protein-encoding clones for Saccharomyces cerevisiae.</title>
        <authorList>
            <person name="Hu Y."/>
            <person name="Rolfs A."/>
            <person name="Bhullar B."/>
            <person name="Murthy T.V.S."/>
            <person name="Zhu C."/>
            <person name="Berger M.F."/>
            <person name="Camargo A.A."/>
            <person name="Kelley F."/>
            <person name="McCarron S."/>
            <person name="Jepson D."/>
            <person name="Richardson A."/>
            <person name="Raphael J."/>
            <person name="Moreira D."/>
            <person name="Taycher E."/>
            <person name="Zuo D."/>
            <person name="Mohr S."/>
            <person name="Kane M.F."/>
            <person name="Williamson J."/>
            <person name="Simpson A.J.G."/>
            <person name="Bulyk M.L."/>
            <person name="Harlow E."/>
            <person name="Marsischky G."/>
            <person name="Kolodner R.D."/>
            <person name="LaBaer J."/>
        </authorList>
    </citation>
    <scope>NUCLEOTIDE SEQUENCE [GENOMIC DNA]</scope>
    <source>
        <strain>ATCC 204508 / S288c</strain>
    </source>
</reference>
<reference key="4">
    <citation type="journal article" date="2003" name="Nature">
        <title>Global analysis of protein localization in budding yeast.</title>
        <authorList>
            <person name="Huh W.-K."/>
            <person name="Falvo J.V."/>
            <person name="Gerke L.C."/>
            <person name="Carroll A.S."/>
            <person name="Howson R.W."/>
            <person name="Weissman J.S."/>
            <person name="O'Shea E.K."/>
        </authorList>
    </citation>
    <scope>SUBCELLULAR LOCATION [LARGE SCALE ANALYSIS]</scope>
</reference>
<reference key="5">
    <citation type="journal article" date="2003" name="Nature">
        <title>Global analysis of protein expression in yeast.</title>
        <authorList>
            <person name="Ghaemmaghami S."/>
            <person name="Huh W.-K."/>
            <person name="Bower K."/>
            <person name="Howson R.W."/>
            <person name="Belle A."/>
            <person name="Dephoure N."/>
            <person name="O'Shea E.K."/>
            <person name="Weissman J.S."/>
        </authorList>
    </citation>
    <scope>LEVEL OF PROTEIN EXPRESSION [LARGE SCALE ANALYSIS]</scope>
</reference>
<reference key="6">
    <citation type="journal article" date="2003" name="Yeast">
        <title>Identification of novel protein-protein interactions at the cytosolic surface of the Sec63 complex in the yeast ER membrane.</title>
        <authorList>
            <person name="Willer M."/>
            <person name="Jermy A.J."/>
            <person name="Young B.P."/>
            <person name="Stirling C.J."/>
        </authorList>
    </citation>
    <scope>INTERACTION WITH SEC72</scope>
</reference>
<reference key="7">
    <citation type="journal article" date="2007" name="J. Proteome Res.">
        <title>Large-scale phosphorylation analysis of alpha-factor-arrested Saccharomyces cerevisiae.</title>
        <authorList>
            <person name="Li X."/>
            <person name="Gerber S.A."/>
            <person name="Rudner A.D."/>
            <person name="Beausoleil S.A."/>
            <person name="Haas W."/>
            <person name="Villen J."/>
            <person name="Elias J.E."/>
            <person name="Gygi S.P."/>
        </authorList>
    </citation>
    <scope>PHOSPHORYLATION [LARGE SCALE ANALYSIS] AT SER-143</scope>
    <scope>IDENTIFICATION BY MASS SPECTROMETRY [LARGE SCALE ANALYSIS]</scope>
    <source>
        <strain>ADR376</strain>
    </source>
</reference>
<reference key="8">
    <citation type="journal article" date="2008" name="Mol. Cell. Proteomics">
        <title>A multidimensional chromatography technology for in-depth phosphoproteome analysis.</title>
        <authorList>
            <person name="Albuquerque C.P."/>
            <person name="Smolka M.B."/>
            <person name="Payne S.H."/>
            <person name="Bafna V."/>
            <person name="Eng J."/>
            <person name="Zhou H."/>
        </authorList>
    </citation>
    <scope>PHOSPHORYLATION [LARGE SCALE ANALYSIS] AT SER-143</scope>
    <scope>IDENTIFICATION BY MASS SPECTROMETRY [LARGE SCALE ANALYSIS]</scope>
</reference>
<reference key="9">
    <citation type="journal article" date="2009" name="Science">
        <title>Global analysis of Cdk1 substrate phosphorylation sites provides insights into evolution.</title>
        <authorList>
            <person name="Holt L.J."/>
            <person name="Tuch B.B."/>
            <person name="Villen J."/>
            <person name="Johnson A.D."/>
            <person name="Gygi S.P."/>
            <person name="Morgan D.O."/>
        </authorList>
    </citation>
    <scope>PHOSPHORYLATION [LARGE SCALE ANALYSIS] AT SER-143</scope>
    <scope>IDENTIFICATION BY MASS SPECTROMETRY [LARGE SCALE ANALYSIS]</scope>
</reference>
<reference key="10">
    <citation type="journal article" date="2011" name="Genes Dev.">
        <title>Diverse protein kinase interactions identified by protein microarrays reveal novel connections between cellular processes.</title>
        <authorList>
            <person name="Fasolo J."/>
            <person name="Sboner A."/>
            <person name="Sun M.G."/>
            <person name="Yu H."/>
            <person name="Chen R."/>
            <person name="Sharon D."/>
            <person name="Kim P.M."/>
            <person name="Gerstein M."/>
            <person name="Snyder M."/>
        </authorList>
    </citation>
    <scope>INTERACTION WITH HRR25</scope>
</reference>
<organism>
    <name type="scientific">Saccharomyces cerevisiae (strain ATCC 204508 / S288c)</name>
    <name type="common">Baker's yeast</name>
    <dbReference type="NCBI Taxonomy" id="559292"/>
    <lineage>
        <taxon>Eukaryota</taxon>
        <taxon>Fungi</taxon>
        <taxon>Dikarya</taxon>
        <taxon>Ascomycota</taxon>
        <taxon>Saccharomycotina</taxon>
        <taxon>Saccharomycetes</taxon>
        <taxon>Saccharomycetales</taxon>
        <taxon>Saccharomycetaceae</taxon>
        <taxon>Saccharomyces</taxon>
    </lineage>
</organism>
<evidence type="ECO:0000269" key="1">
    <source>
    </source>
</evidence>
<evidence type="ECO:0000269" key="2">
    <source>
    </source>
</evidence>
<evidence type="ECO:0000269" key="3">
    <source>
    </source>
</evidence>
<evidence type="ECO:0000269" key="4">
    <source>
    </source>
</evidence>
<evidence type="ECO:0000305" key="5"/>
<evidence type="ECO:0007744" key="6">
    <source>
    </source>
</evidence>
<evidence type="ECO:0007744" key="7">
    <source>
    </source>
</evidence>
<evidence type="ECO:0007744" key="8">
    <source>
    </source>
</evidence>
<evidence type="ECO:0007829" key="9">
    <source>
        <dbReference type="PDB" id="3RBY"/>
    </source>
</evidence>
<dbReference type="EMBL" id="U17243">
    <property type="protein sequence ID" value="AAB67346.1"/>
    <property type="molecule type" value="Genomic_DNA"/>
</dbReference>
<dbReference type="EMBL" id="AY558217">
    <property type="protein sequence ID" value="AAS56543.1"/>
    <property type="molecule type" value="Genomic_DNA"/>
</dbReference>
<dbReference type="EMBL" id="BK006945">
    <property type="protein sequence ID" value="DAA09611.1"/>
    <property type="molecule type" value="Genomic_DNA"/>
</dbReference>
<dbReference type="PIR" id="S50385">
    <property type="entry name" value="S50385"/>
</dbReference>
<dbReference type="RefSeq" id="NP_013404.1">
    <property type="nucleotide sequence ID" value="NM_001182189.1"/>
</dbReference>
<dbReference type="PDB" id="3RBY">
    <property type="method" value="X-ray"/>
    <property type="resolution" value="2.30 A"/>
    <property type="chains" value="A/B=1-244"/>
</dbReference>
<dbReference type="PDBsum" id="3RBY"/>
<dbReference type="SMR" id="Q05905"/>
<dbReference type="BioGRID" id="31565">
    <property type="interactions" value="94"/>
</dbReference>
<dbReference type="DIP" id="DIP-4329N"/>
<dbReference type="FunCoup" id="Q05905">
    <property type="interactions" value="46"/>
</dbReference>
<dbReference type="IntAct" id="Q05905">
    <property type="interactions" value="2"/>
</dbReference>
<dbReference type="STRING" id="4932.YLR301W"/>
<dbReference type="iPTMnet" id="Q05905"/>
<dbReference type="PaxDb" id="4932-YLR301W"/>
<dbReference type="PeptideAtlas" id="Q05905"/>
<dbReference type="TopDownProteomics" id="Q05905"/>
<dbReference type="EnsemblFungi" id="YLR301W_mRNA">
    <property type="protein sequence ID" value="YLR301W"/>
    <property type="gene ID" value="YLR301W"/>
</dbReference>
<dbReference type="GeneID" id="851008"/>
<dbReference type="KEGG" id="sce:YLR301W"/>
<dbReference type="AGR" id="SGD:S000004292"/>
<dbReference type="SGD" id="S000004292">
    <property type="gene designation" value="HRI1"/>
</dbReference>
<dbReference type="VEuPathDB" id="FungiDB:YLR301W"/>
<dbReference type="eggNOG" id="ENOG502QTYD">
    <property type="taxonomic scope" value="Eukaryota"/>
</dbReference>
<dbReference type="HOGENOM" id="CLU_097607_0_0_1"/>
<dbReference type="InParanoid" id="Q05905"/>
<dbReference type="OMA" id="GEVNTTW"/>
<dbReference type="OrthoDB" id="4045395at2759"/>
<dbReference type="BioCyc" id="YEAST:G3O-32392-MONOMER"/>
<dbReference type="BioGRID-ORCS" id="851008">
    <property type="hits" value="0 hits in 10 CRISPR screens"/>
</dbReference>
<dbReference type="EvolutionaryTrace" id="Q05905"/>
<dbReference type="PRO" id="PR:Q05905"/>
<dbReference type="Proteomes" id="UP000002311">
    <property type="component" value="Chromosome XII"/>
</dbReference>
<dbReference type="RNAct" id="Q05905">
    <property type="molecule type" value="protein"/>
</dbReference>
<dbReference type="GO" id="GO:0005829">
    <property type="term" value="C:cytosol"/>
    <property type="evidence" value="ECO:0007005"/>
    <property type="project" value="SGD"/>
</dbReference>
<dbReference type="GO" id="GO:0005789">
    <property type="term" value="C:endoplasmic reticulum membrane"/>
    <property type="evidence" value="ECO:0000353"/>
    <property type="project" value="SGD"/>
</dbReference>
<dbReference type="GO" id="GO:0005634">
    <property type="term" value="C:nucleus"/>
    <property type="evidence" value="ECO:0007669"/>
    <property type="project" value="UniProtKB-SubCell"/>
</dbReference>
<dbReference type="GO" id="GO:0006612">
    <property type="term" value="P:protein targeting to membrane"/>
    <property type="evidence" value="ECO:0000353"/>
    <property type="project" value="SGD"/>
</dbReference>
<dbReference type="CDD" id="cd11693">
    <property type="entry name" value="HRI1_C_like"/>
    <property type="match status" value="1"/>
</dbReference>
<dbReference type="CDD" id="cd11692">
    <property type="entry name" value="HRI1_N_like"/>
    <property type="match status" value="1"/>
</dbReference>
<dbReference type="Gene3D" id="2.40.128.310">
    <property type="entry name" value="Protein HRI1, C-terminal domain"/>
    <property type="match status" value="1"/>
</dbReference>
<dbReference type="Gene3D" id="2.40.128.320">
    <property type="entry name" value="Protein HRI1, N-terminal domain"/>
    <property type="match status" value="1"/>
</dbReference>
<dbReference type="InterPro" id="IPR031818">
    <property type="entry name" value="Hri1"/>
</dbReference>
<dbReference type="InterPro" id="IPR038744">
    <property type="entry name" value="Hri1_N"/>
</dbReference>
<dbReference type="InterPro" id="IPR043047">
    <property type="entry name" value="Hri1_N_sf"/>
</dbReference>
<dbReference type="Pfam" id="PF16815">
    <property type="entry name" value="HRI1"/>
    <property type="match status" value="1"/>
</dbReference>
<gene>
    <name type="primary">HRI1</name>
    <name type="ordered locus">YLR301W</name>
</gene>
<keyword id="KW-0002">3D-structure</keyword>
<keyword id="KW-0963">Cytoplasm</keyword>
<keyword id="KW-0539">Nucleus</keyword>
<keyword id="KW-0597">Phosphoprotein</keyword>
<keyword id="KW-1185">Reference proteome</keyword>